<proteinExistence type="inferred from homology"/>
<sequence>MRIAILGRPNVGKSSIFNRLCKRSLAIVNAQEGTTRDRLYGEIRAWDSIVHVIDTGGVDQESTDRFQKQIHKQALAAAEEASVLLLVVDIRCGITKQDEELAKRLLPLKKPLILVMNKADSQQDLQRIHEFYGLGISNMIATSASHDKHIDVLLERIRQVAEIPLPSAEEQENTQEEEFSSKESSVALHTFADETLFENESLSQEEASFLEELVAQTTTPSISNRPLKVALIGHPNVGKSSIVNALLKEERCITDNSPGTTRDNVDVSYTYNDKEYVFIDTAGLRKAKSIKNSVEWMSSSRTEKAISRADICLLVIDATQQLSYQDKRILSLIARYKKPHVILVNKWDLMFGVRMEHYVQDLRKMDPYIGQARILCISAKQRRNLSQIFSAVDDVYTIATTKLSTSLVNKVLAGAMQRHHPQVINGKRLRIYYAIHKTVTPFSFLLFINSNTLLTKPYELYLKNTLKAAFNLYGIPFDLEYKAKPARKSN</sequence>
<organism>
    <name type="scientific">Chlamydia muridarum (strain MoPn / Nigg)</name>
    <dbReference type="NCBI Taxonomy" id="243161"/>
    <lineage>
        <taxon>Bacteria</taxon>
        <taxon>Pseudomonadati</taxon>
        <taxon>Chlamydiota</taxon>
        <taxon>Chlamydiia</taxon>
        <taxon>Chlamydiales</taxon>
        <taxon>Chlamydiaceae</taxon>
        <taxon>Chlamydia/Chlamydophila group</taxon>
        <taxon>Chlamydia</taxon>
    </lineage>
</organism>
<gene>
    <name evidence="1" type="primary">der</name>
    <name type="synonym">engA</name>
    <name type="ordered locus">TC_0076</name>
</gene>
<evidence type="ECO:0000255" key="1">
    <source>
        <dbReference type="HAMAP-Rule" id="MF_00195"/>
    </source>
</evidence>
<evidence type="ECO:0000256" key="2">
    <source>
        <dbReference type="SAM" id="MobiDB-lite"/>
    </source>
</evidence>
<keyword id="KW-0342">GTP-binding</keyword>
<keyword id="KW-0547">Nucleotide-binding</keyword>
<keyword id="KW-0677">Repeat</keyword>
<keyword id="KW-0690">Ribosome biogenesis</keyword>
<dbReference type="EMBL" id="AE002160">
    <property type="protein sequence ID" value="AAF38958.1"/>
    <property type="molecule type" value="Genomic_DNA"/>
</dbReference>
<dbReference type="PIR" id="A81744">
    <property type="entry name" value="A81744"/>
</dbReference>
<dbReference type="RefSeq" id="WP_010229302.1">
    <property type="nucleotide sequence ID" value="NZ_CP063055.1"/>
</dbReference>
<dbReference type="SMR" id="Q9PLM3"/>
<dbReference type="GeneID" id="1245605"/>
<dbReference type="KEGG" id="cmu:TC_0076"/>
<dbReference type="eggNOG" id="COG1160">
    <property type="taxonomic scope" value="Bacteria"/>
</dbReference>
<dbReference type="HOGENOM" id="CLU_016077_6_2_0"/>
<dbReference type="OrthoDB" id="9805918at2"/>
<dbReference type="Proteomes" id="UP000000800">
    <property type="component" value="Chromosome"/>
</dbReference>
<dbReference type="GO" id="GO:0005525">
    <property type="term" value="F:GTP binding"/>
    <property type="evidence" value="ECO:0007669"/>
    <property type="project" value="UniProtKB-UniRule"/>
</dbReference>
<dbReference type="GO" id="GO:0043022">
    <property type="term" value="F:ribosome binding"/>
    <property type="evidence" value="ECO:0007669"/>
    <property type="project" value="TreeGrafter"/>
</dbReference>
<dbReference type="GO" id="GO:0042254">
    <property type="term" value="P:ribosome biogenesis"/>
    <property type="evidence" value="ECO:0007669"/>
    <property type="project" value="UniProtKB-KW"/>
</dbReference>
<dbReference type="CDD" id="cd01894">
    <property type="entry name" value="EngA1"/>
    <property type="match status" value="1"/>
</dbReference>
<dbReference type="CDD" id="cd01895">
    <property type="entry name" value="EngA2"/>
    <property type="match status" value="1"/>
</dbReference>
<dbReference type="FunFam" id="3.40.50.300:FF:000040">
    <property type="entry name" value="GTPase Der"/>
    <property type="match status" value="1"/>
</dbReference>
<dbReference type="Gene3D" id="3.30.300.20">
    <property type="match status" value="1"/>
</dbReference>
<dbReference type="Gene3D" id="3.40.50.300">
    <property type="entry name" value="P-loop containing nucleotide triphosphate hydrolases"/>
    <property type="match status" value="2"/>
</dbReference>
<dbReference type="HAMAP" id="MF_00195">
    <property type="entry name" value="GTPase_Der"/>
    <property type="match status" value="1"/>
</dbReference>
<dbReference type="InterPro" id="IPR031166">
    <property type="entry name" value="G_ENGA"/>
</dbReference>
<dbReference type="InterPro" id="IPR006073">
    <property type="entry name" value="GTP-bd"/>
</dbReference>
<dbReference type="InterPro" id="IPR016484">
    <property type="entry name" value="GTPase_Der"/>
</dbReference>
<dbReference type="InterPro" id="IPR032859">
    <property type="entry name" value="KH_dom-like"/>
</dbReference>
<dbReference type="InterPro" id="IPR015946">
    <property type="entry name" value="KH_dom-like_a/b"/>
</dbReference>
<dbReference type="InterPro" id="IPR027417">
    <property type="entry name" value="P-loop_NTPase"/>
</dbReference>
<dbReference type="InterPro" id="IPR005225">
    <property type="entry name" value="Small_GTP-bd"/>
</dbReference>
<dbReference type="NCBIfam" id="TIGR03594">
    <property type="entry name" value="GTPase_EngA"/>
    <property type="match status" value="1"/>
</dbReference>
<dbReference type="NCBIfam" id="TIGR00231">
    <property type="entry name" value="small_GTP"/>
    <property type="match status" value="2"/>
</dbReference>
<dbReference type="PANTHER" id="PTHR43834">
    <property type="entry name" value="GTPASE DER"/>
    <property type="match status" value="1"/>
</dbReference>
<dbReference type="PANTHER" id="PTHR43834:SF6">
    <property type="entry name" value="GTPASE DER"/>
    <property type="match status" value="1"/>
</dbReference>
<dbReference type="Pfam" id="PF14714">
    <property type="entry name" value="KH_dom-like"/>
    <property type="match status" value="1"/>
</dbReference>
<dbReference type="Pfam" id="PF01926">
    <property type="entry name" value="MMR_HSR1"/>
    <property type="match status" value="2"/>
</dbReference>
<dbReference type="PIRSF" id="PIRSF006485">
    <property type="entry name" value="GTP-binding_EngA"/>
    <property type="match status" value="1"/>
</dbReference>
<dbReference type="PRINTS" id="PR00326">
    <property type="entry name" value="GTP1OBG"/>
</dbReference>
<dbReference type="SUPFAM" id="SSF52540">
    <property type="entry name" value="P-loop containing nucleoside triphosphate hydrolases"/>
    <property type="match status" value="1"/>
</dbReference>
<dbReference type="SUPFAM" id="SSF82653">
    <property type="entry name" value="Probable GTPase Der, C-terminal domain"/>
    <property type="match status" value="1"/>
</dbReference>
<dbReference type="PROSITE" id="PS51712">
    <property type="entry name" value="G_ENGA"/>
    <property type="match status" value="2"/>
</dbReference>
<reference key="1">
    <citation type="journal article" date="2000" name="Nucleic Acids Res.">
        <title>Genome sequences of Chlamydia trachomatis MoPn and Chlamydia pneumoniae AR39.</title>
        <authorList>
            <person name="Read T.D."/>
            <person name="Brunham R.C."/>
            <person name="Shen C."/>
            <person name="Gill S.R."/>
            <person name="Heidelberg J.F."/>
            <person name="White O."/>
            <person name="Hickey E.K."/>
            <person name="Peterson J.D."/>
            <person name="Utterback T.R."/>
            <person name="Berry K.J."/>
            <person name="Bass S."/>
            <person name="Linher K.D."/>
            <person name="Weidman J.F."/>
            <person name="Khouri H.M."/>
            <person name="Craven B."/>
            <person name="Bowman C."/>
            <person name="Dodson R.J."/>
            <person name="Gwinn M.L."/>
            <person name="Nelson W.C."/>
            <person name="DeBoy R.T."/>
            <person name="Kolonay J.F."/>
            <person name="McClarty G."/>
            <person name="Salzberg S.L."/>
            <person name="Eisen J.A."/>
            <person name="Fraser C.M."/>
        </authorList>
    </citation>
    <scope>NUCLEOTIDE SEQUENCE [LARGE SCALE GENOMIC DNA]</scope>
    <source>
        <strain>MoPn / Nigg</strain>
    </source>
</reference>
<feature type="chain" id="PRO_0000178979" description="GTPase Der">
    <location>
        <begin position="1"/>
        <end position="490"/>
    </location>
</feature>
<feature type="domain" description="EngA-type G 1">
    <location>
        <begin position="1"/>
        <end position="165"/>
    </location>
</feature>
<feature type="domain" description="EngA-type G 2">
    <location>
        <begin position="227"/>
        <end position="400"/>
    </location>
</feature>
<feature type="domain" description="KH-like" evidence="1">
    <location>
        <begin position="401"/>
        <end position="485"/>
    </location>
</feature>
<feature type="region of interest" description="Disordered" evidence="2">
    <location>
        <begin position="165"/>
        <end position="184"/>
    </location>
</feature>
<feature type="compositionally biased region" description="Acidic residues" evidence="2">
    <location>
        <begin position="169"/>
        <end position="178"/>
    </location>
</feature>
<feature type="binding site" evidence="1">
    <location>
        <begin position="7"/>
        <end position="14"/>
    </location>
    <ligand>
        <name>GTP</name>
        <dbReference type="ChEBI" id="CHEBI:37565"/>
        <label>1</label>
    </ligand>
</feature>
<feature type="binding site" evidence="1">
    <location>
        <begin position="54"/>
        <end position="58"/>
    </location>
    <ligand>
        <name>GTP</name>
        <dbReference type="ChEBI" id="CHEBI:37565"/>
        <label>1</label>
    </ligand>
</feature>
<feature type="binding site" evidence="1">
    <location>
        <begin position="117"/>
        <end position="120"/>
    </location>
    <ligand>
        <name>GTP</name>
        <dbReference type="ChEBI" id="CHEBI:37565"/>
        <label>1</label>
    </ligand>
</feature>
<feature type="binding site" evidence="1">
    <location>
        <begin position="233"/>
        <end position="240"/>
    </location>
    <ligand>
        <name>GTP</name>
        <dbReference type="ChEBI" id="CHEBI:37565"/>
        <label>2</label>
    </ligand>
</feature>
<feature type="binding site" evidence="1">
    <location>
        <begin position="280"/>
        <end position="284"/>
    </location>
    <ligand>
        <name>GTP</name>
        <dbReference type="ChEBI" id="CHEBI:37565"/>
        <label>2</label>
    </ligand>
</feature>
<feature type="binding site" evidence="1">
    <location>
        <begin position="345"/>
        <end position="348"/>
    </location>
    <ligand>
        <name>GTP</name>
        <dbReference type="ChEBI" id="CHEBI:37565"/>
        <label>2</label>
    </ligand>
</feature>
<comment type="function">
    <text evidence="1">GTPase that plays an essential role in the late steps of ribosome biogenesis.</text>
</comment>
<comment type="subunit">
    <text evidence="1">Associates with the 50S ribosomal subunit.</text>
</comment>
<comment type="similarity">
    <text evidence="1">Belongs to the TRAFAC class TrmE-Era-EngA-EngB-Septin-like GTPase superfamily. EngA (Der) GTPase family.</text>
</comment>
<accession>Q9PLM3</accession>
<name>DER_CHLMU</name>
<protein>
    <recommendedName>
        <fullName evidence="1">GTPase Der</fullName>
    </recommendedName>
    <alternativeName>
        <fullName evidence="1">GTP-binding protein EngA</fullName>
    </alternativeName>
</protein>